<evidence type="ECO:0000255" key="1">
    <source>
        <dbReference type="HAMAP-Rule" id="MF_00689"/>
    </source>
</evidence>
<comment type="function">
    <text evidence="1">Functions in the N-end rule pathway of protein degradation where it conjugates Leu from its aminoacyl-tRNA to the N-termini of proteins containing an N-terminal aspartate or glutamate.</text>
</comment>
<comment type="catalytic activity">
    <reaction evidence="1">
        <text>N-terminal L-glutamyl-[protein] + L-leucyl-tRNA(Leu) = N-terminal L-leucyl-L-glutamyl-[protein] + tRNA(Leu) + H(+)</text>
        <dbReference type="Rhea" id="RHEA:50412"/>
        <dbReference type="Rhea" id="RHEA-COMP:9613"/>
        <dbReference type="Rhea" id="RHEA-COMP:9622"/>
        <dbReference type="Rhea" id="RHEA-COMP:12664"/>
        <dbReference type="Rhea" id="RHEA-COMP:12668"/>
        <dbReference type="ChEBI" id="CHEBI:15378"/>
        <dbReference type="ChEBI" id="CHEBI:64721"/>
        <dbReference type="ChEBI" id="CHEBI:78442"/>
        <dbReference type="ChEBI" id="CHEBI:78494"/>
        <dbReference type="ChEBI" id="CHEBI:133041"/>
        <dbReference type="EC" id="2.3.2.29"/>
    </reaction>
</comment>
<comment type="catalytic activity">
    <reaction evidence="1">
        <text>N-terminal L-aspartyl-[protein] + L-leucyl-tRNA(Leu) = N-terminal L-leucyl-L-aspartyl-[protein] + tRNA(Leu) + H(+)</text>
        <dbReference type="Rhea" id="RHEA:50420"/>
        <dbReference type="Rhea" id="RHEA-COMP:9613"/>
        <dbReference type="Rhea" id="RHEA-COMP:9622"/>
        <dbReference type="Rhea" id="RHEA-COMP:12669"/>
        <dbReference type="Rhea" id="RHEA-COMP:12674"/>
        <dbReference type="ChEBI" id="CHEBI:15378"/>
        <dbReference type="ChEBI" id="CHEBI:64720"/>
        <dbReference type="ChEBI" id="CHEBI:78442"/>
        <dbReference type="ChEBI" id="CHEBI:78494"/>
        <dbReference type="ChEBI" id="CHEBI:133042"/>
        <dbReference type="EC" id="2.3.2.29"/>
    </reaction>
</comment>
<comment type="subcellular location">
    <subcellularLocation>
        <location evidence="1">Cytoplasm</location>
    </subcellularLocation>
</comment>
<comment type="similarity">
    <text evidence="1">Belongs to the R-transferase family. Bpt subfamily.</text>
</comment>
<reference key="1">
    <citation type="journal article" date="2011" name="Appl. Environ. Microbiol.">
        <title>Genomic potential of Marinobacter aquaeolei, a biogeochemical 'opportunitroph'.</title>
        <authorList>
            <person name="Singer E."/>
            <person name="Webb E.A."/>
            <person name="Nelson W.C."/>
            <person name="Heidelberg J.F."/>
            <person name="Ivanova N."/>
            <person name="Pati A."/>
            <person name="Edwards K.J."/>
        </authorList>
    </citation>
    <scope>NUCLEOTIDE SEQUENCE [LARGE SCALE GENOMIC DNA]</scope>
    <source>
        <strain>ATCC 700491 / DSM 11845 / VT8</strain>
    </source>
</reference>
<gene>
    <name evidence="1" type="primary">bpt</name>
    <name type="ordered locus">Maqu_1755</name>
</gene>
<protein>
    <recommendedName>
        <fullName evidence="1">Aspartate/glutamate leucyltransferase</fullName>
        <ecNumber evidence="1">2.3.2.29</ecNumber>
    </recommendedName>
</protein>
<feature type="chain" id="PRO_1000045136" description="Aspartate/glutamate leucyltransferase">
    <location>
        <begin position="1"/>
        <end position="237"/>
    </location>
</feature>
<accession>A1U1G9</accession>
<proteinExistence type="inferred from homology"/>
<dbReference type="EC" id="2.3.2.29" evidence="1"/>
<dbReference type="EMBL" id="CP000514">
    <property type="protein sequence ID" value="ABM18838.1"/>
    <property type="molecule type" value="Genomic_DNA"/>
</dbReference>
<dbReference type="RefSeq" id="WP_011785237.1">
    <property type="nucleotide sequence ID" value="NC_008740.1"/>
</dbReference>
<dbReference type="SMR" id="A1U1G9"/>
<dbReference type="STRING" id="351348.Maqu_1755"/>
<dbReference type="KEGG" id="maq:Maqu_1755"/>
<dbReference type="eggNOG" id="COG2935">
    <property type="taxonomic scope" value="Bacteria"/>
</dbReference>
<dbReference type="HOGENOM" id="CLU_077607_0_0_6"/>
<dbReference type="OrthoDB" id="9782022at2"/>
<dbReference type="Proteomes" id="UP000000998">
    <property type="component" value="Chromosome"/>
</dbReference>
<dbReference type="GO" id="GO:0005737">
    <property type="term" value="C:cytoplasm"/>
    <property type="evidence" value="ECO:0007669"/>
    <property type="project" value="UniProtKB-SubCell"/>
</dbReference>
<dbReference type="GO" id="GO:0004057">
    <property type="term" value="F:arginyl-tRNA--protein transferase activity"/>
    <property type="evidence" value="ECO:0007669"/>
    <property type="project" value="InterPro"/>
</dbReference>
<dbReference type="GO" id="GO:0008914">
    <property type="term" value="F:leucyl-tRNA--protein transferase activity"/>
    <property type="evidence" value="ECO:0007669"/>
    <property type="project" value="UniProtKB-UniRule"/>
</dbReference>
<dbReference type="GO" id="GO:0071596">
    <property type="term" value="P:ubiquitin-dependent protein catabolic process via the N-end rule pathway"/>
    <property type="evidence" value="ECO:0007669"/>
    <property type="project" value="InterPro"/>
</dbReference>
<dbReference type="Gene3D" id="3.40.630.30">
    <property type="match status" value="1"/>
</dbReference>
<dbReference type="HAMAP" id="MF_00689">
    <property type="entry name" value="Bpt"/>
    <property type="match status" value="1"/>
</dbReference>
<dbReference type="InterPro" id="IPR016181">
    <property type="entry name" value="Acyl_CoA_acyltransferase"/>
</dbReference>
<dbReference type="InterPro" id="IPR017138">
    <property type="entry name" value="Asp_Glu_LeuTrfase"/>
</dbReference>
<dbReference type="InterPro" id="IPR030700">
    <property type="entry name" value="N-end_Aminoacyl_Trfase"/>
</dbReference>
<dbReference type="InterPro" id="IPR007472">
    <property type="entry name" value="N-end_Aminoacyl_Trfase_C"/>
</dbReference>
<dbReference type="InterPro" id="IPR007471">
    <property type="entry name" value="N-end_Aminoacyl_Trfase_N"/>
</dbReference>
<dbReference type="NCBIfam" id="NF002341">
    <property type="entry name" value="PRK01305.1-1"/>
    <property type="match status" value="1"/>
</dbReference>
<dbReference type="NCBIfam" id="NF002342">
    <property type="entry name" value="PRK01305.1-3"/>
    <property type="match status" value="1"/>
</dbReference>
<dbReference type="NCBIfam" id="NF002345">
    <property type="entry name" value="PRK01305.2-2"/>
    <property type="match status" value="1"/>
</dbReference>
<dbReference type="NCBIfam" id="NF002346">
    <property type="entry name" value="PRK01305.2-3"/>
    <property type="match status" value="1"/>
</dbReference>
<dbReference type="PANTHER" id="PTHR21367">
    <property type="entry name" value="ARGININE-TRNA-PROTEIN TRANSFERASE 1"/>
    <property type="match status" value="1"/>
</dbReference>
<dbReference type="PANTHER" id="PTHR21367:SF1">
    <property type="entry name" value="ARGINYL-TRNA--PROTEIN TRANSFERASE 1"/>
    <property type="match status" value="1"/>
</dbReference>
<dbReference type="Pfam" id="PF04377">
    <property type="entry name" value="ATE_C"/>
    <property type="match status" value="1"/>
</dbReference>
<dbReference type="Pfam" id="PF04376">
    <property type="entry name" value="ATE_N"/>
    <property type="match status" value="1"/>
</dbReference>
<dbReference type="PIRSF" id="PIRSF037208">
    <property type="entry name" value="ATE_pro_prd"/>
    <property type="match status" value="1"/>
</dbReference>
<dbReference type="SUPFAM" id="SSF55729">
    <property type="entry name" value="Acyl-CoA N-acyltransferases (Nat)"/>
    <property type="match status" value="1"/>
</dbReference>
<sequence>MSNLRTLVFFATPPHDCSYLPDREATTMFVDPRAHIDKKLYSQLTALGFRRSGSHYYRPHCESCNACVPVRLQVGQFEPDRNQRRVLRKNADLDCKLVPAAFSERYYRLYAHYIEERHRDGDMYPPSREQFTSFLVEGATDSWFLEMSLDGELVGLAAVDLLDDGLSAIYTVFAPELEHRSLGTFAVLWQIEEAKRRELPHLYLGYWIKECRKMNYKTRFQPIEALRDGHWREMSTD</sequence>
<organism>
    <name type="scientific">Marinobacter nauticus (strain ATCC 700491 / DSM 11845 / VT8)</name>
    <name type="common">Marinobacter aquaeolei</name>
    <dbReference type="NCBI Taxonomy" id="351348"/>
    <lineage>
        <taxon>Bacteria</taxon>
        <taxon>Pseudomonadati</taxon>
        <taxon>Pseudomonadota</taxon>
        <taxon>Gammaproteobacteria</taxon>
        <taxon>Pseudomonadales</taxon>
        <taxon>Marinobacteraceae</taxon>
        <taxon>Marinobacter</taxon>
    </lineage>
</organism>
<name>BPT_MARN8</name>
<keyword id="KW-0012">Acyltransferase</keyword>
<keyword id="KW-0963">Cytoplasm</keyword>
<keyword id="KW-0808">Transferase</keyword>